<proteinExistence type="inferred from homology"/>
<accession>B7IQX7</accession>
<organism>
    <name type="scientific">Bacillus cereus (strain G9842)</name>
    <dbReference type="NCBI Taxonomy" id="405531"/>
    <lineage>
        <taxon>Bacteria</taxon>
        <taxon>Bacillati</taxon>
        <taxon>Bacillota</taxon>
        <taxon>Bacilli</taxon>
        <taxon>Bacillales</taxon>
        <taxon>Bacillaceae</taxon>
        <taxon>Bacillus</taxon>
        <taxon>Bacillus cereus group</taxon>
    </lineage>
</organism>
<comment type="function">
    <text evidence="1">Probably functions as a manganese efflux pump.</text>
</comment>
<comment type="subcellular location">
    <subcellularLocation>
        <location evidence="1">Cell membrane</location>
        <topology evidence="1">Multi-pass membrane protein</topology>
    </subcellularLocation>
</comment>
<comment type="similarity">
    <text evidence="1">Belongs to the MntP (TC 9.B.29) family.</text>
</comment>
<gene>
    <name evidence="1" type="primary">mntP</name>
    <name type="ordered locus">BCG9842_B5505</name>
</gene>
<sequence length="182" mass="19743">MTFEQLIPLIIMAFALGMDAFSVSLGMGMMPLKLRQILYIGMTIGIFHIIMPFIGMVLGRFLSEKYGDIAHFAGAILLIGLGFYIVYSTILQNGETRTVPIGISLFVFAFGVSIDSFSVGLSLGIYGAQTIITILLFGFVSMLLAWIGLLIGRHAKDMLGTYGEIVGGIILVGFGLYILFPI</sequence>
<keyword id="KW-1003">Cell membrane</keyword>
<keyword id="KW-0406">Ion transport</keyword>
<keyword id="KW-0464">Manganese</keyword>
<keyword id="KW-0472">Membrane</keyword>
<keyword id="KW-0812">Transmembrane</keyword>
<keyword id="KW-1133">Transmembrane helix</keyword>
<keyword id="KW-0813">Transport</keyword>
<evidence type="ECO:0000255" key="1">
    <source>
        <dbReference type="HAMAP-Rule" id="MF_01521"/>
    </source>
</evidence>
<name>MNTP_BACC2</name>
<feature type="chain" id="PRO_1000200012" description="Putative manganese efflux pump MntP">
    <location>
        <begin position="1"/>
        <end position="182"/>
    </location>
</feature>
<feature type="transmembrane region" description="Helical" evidence="1">
    <location>
        <begin position="6"/>
        <end position="26"/>
    </location>
</feature>
<feature type="transmembrane region" description="Helical" evidence="1">
    <location>
        <begin position="37"/>
        <end position="57"/>
    </location>
</feature>
<feature type="transmembrane region" description="Helical" evidence="1">
    <location>
        <begin position="71"/>
        <end position="91"/>
    </location>
</feature>
<feature type="transmembrane region" description="Helical" evidence="1">
    <location>
        <begin position="101"/>
        <end position="121"/>
    </location>
</feature>
<feature type="transmembrane region" description="Helical" evidence="1">
    <location>
        <begin position="131"/>
        <end position="151"/>
    </location>
</feature>
<feature type="transmembrane region" description="Helical" evidence="1">
    <location>
        <begin position="162"/>
        <end position="182"/>
    </location>
</feature>
<dbReference type="EMBL" id="CP001186">
    <property type="protein sequence ID" value="ACK96547.1"/>
    <property type="molecule type" value="Genomic_DNA"/>
</dbReference>
<dbReference type="RefSeq" id="WP_000142476.1">
    <property type="nucleotide sequence ID" value="NC_011772.1"/>
</dbReference>
<dbReference type="KEGG" id="bcg:BCG9842_B5505"/>
<dbReference type="HOGENOM" id="CLU_096410_1_0_9"/>
<dbReference type="Proteomes" id="UP000006744">
    <property type="component" value="Chromosome"/>
</dbReference>
<dbReference type="GO" id="GO:0005886">
    <property type="term" value="C:plasma membrane"/>
    <property type="evidence" value="ECO:0007669"/>
    <property type="project" value="UniProtKB-SubCell"/>
</dbReference>
<dbReference type="GO" id="GO:0005384">
    <property type="term" value="F:manganese ion transmembrane transporter activity"/>
    <property type="evidence" value="ECO:0007669"/>
    <property type="project" value="UniProtKB-UniRule"/>
</dbReference>
<dbReference type="HAMAP" id="MF_01521">
    <property type="entry name" value="MntP_pump"/>
    <property type="match status" value="1"/>
</dbReference>
<dbReference type="InterPro" id="IPR003810">
    <property type="entry name" value="Mntp/YtaF"/>
</dbReference>
<dbReference type="InterPro" id="IPR022929">
    <property type="entry name" value="Put_MntP"/>
</dbReference>
<dbReference type="PANTHER" id="PTHR35529">
    <property type="entry name" value="MANGANESE EFFLUX PUMP MNTP-RELATED"/>
    <property type="match status" value="1"/>
</dbReference>
<dbReference type="PANTHER" id="PTHR35529:SF1">
    <property type="entry name" value="MANGANESE EFFLUX PUMP MNTP-RELATED"/>
    <property type="match status" value="1"/>
</dbReference>
<dbReference type="Pfam" id="PF02659">
    <property type="entry name" value="Mntp"/>
    <property type="match status" value="1"/>
</dbReference>
<protein>
    <recommendedName>
        <fullName evidence="1">Putative manganese efflux pump MntP</fullName>
    </recommendedName>
</protein>
<reference key="1">
    <citation type="submission" date="2008-10" db="EMBL/GenBank/DDBJ databases">
        <title>Genome sequence of Bacillus cereus G9842.</title>
        <authorList>
            <person name="Dodson R.J."/>
            <person name="Durkin A.S."/>
            <person name="Rosovitz M.J."/>
            <person name="Rasko D.A."/>
            <person name="Hoffmaster A."/>
            <person name="Ravel J."/>
            <person name="Sutton G."/>
        </authorList>
    </citation>
    <scope>NUCLEOTIDE SEQUENCE [LARGE SCALE GENOMIC DNA]</scope>
    <source>
        <strain>G9842</strain>
    </source>
</reference>